<dbReference type="EC" id="2.7.1.60" evidence="1"/>
<dbReference type="EMBL" id="CP001138">
    <property type="protein sequence ID" value="ACH52244.1"/>
    <property type="molecule type" value="Genomic_DNA"/>
</dbReference>
<dbReference type="RefSeq" id="WP_000208983.1">
    <property type="nucleotide sequence ID" value="NC_011149.1"/>
</dbReference>
<dbReference type="SMR" id="B5F7J6"/>
<dbReference type="KEGG" id="sea:SeAg_B3527"/>
<dbReference type="HOGENOM" id="CLU_036604_0_4_6"/>
<dbReference type="UniPathway" id="UPA00629">
    <property type="reaction ID" value="UER00681"/>
</dbReference>
<dbReference type="Proteomes" id="UP000008819">
    <property type="component" value="Chromosome"/>
</dbReference>
<dbReference type="GO" id="GO:0005524">
    <property type="term" value="F:ATP binding"/>
    <property type="evidence" value="ECO:0007669"/>
    <property type="project" value="UniProtKB-UniRule"/>
</dbReference>
<dbReference type="GO" id="GO:0009384">
    <property type="term" value="F:N-acylmannosamine kinase activity"/>
    <property type="evidence" value="ECO:0007669"/>
    <property type="project" value="UniProtKB-UniRule"/>
</dbReference>
<dbReference type="GO" id="GO:0008270">
    <property type="term" value="F:zinc ion binding"/>
    <property type="evidence" value="ECO:0007669"/>
    <property type="project" value="UniProtKB-UniRule"/>
</dbReference>
<dbReference type="GO" id="GO:0019262">
    <property type="term" value="P:N-acetylneuraminate catabolic process"/>
    <property type="evidence" value="ECO:0007669"/>
    <property type="project" value="UniProtKB-UniRule"/>
</dbReference>
<dbReference type="FunFam" id="3.30.420.40:FF:000062">
    <property type="entry name" value="N-acetylmannosamine kinase"/>
    <property type="match status" value="1"/>
</dbReference>
<dbReference type="FunFam" id="3.30.420.40:FF:000063">
    <property type="entry name" value="N-acetylmannosamine kinase"/>
    <property type="match status" value="1"/>
</dbReference>
<dbReference type="Gene3D" id="3.30.420.40">
    <property type="match status" value="2"/>
</dbReference>
<dbReference type="HAMAP" id="MF_01234">
    <property type="entry name" value="ManNAc_kinase"/>
    <property type="match status" value="1"/>
</dbReference>
<dbReference type="InterPro" id="IPR043129">
    <property type="entry name" value="ATPase_NBD"/>
</dbReference>
<dbReference type="InterPro" id="IPR023945">
    <property type="entry name" value="ManNAc_kinase_bac"/>
</dbReference>
<dbReference type="InterPro" id="IPR000600">
    <property type="entry name" value="ROK"/>
</dbReference>
<dbReference type="InterPro" id="IPR049874">
    <property type="entry name" value="ROK_cs"/>
</dbReference>
<dbReference type="NCBIfam" id="NF047821">
    <property type="entry name" value="NactlManKinNanK"/>
    <property type="match status" value="1"/>
</dbReference>
<dbReference type="NCBIfam" id="NF003461">
    <property type="entry name" value="PRK05082.1"/>
    <property type="match status" value="1"/>
</dbReference>
<dbReference type="PANTHER" id="PTHR18964:SF169">
    <property type="entry name" value="N-ACETYLMANNOSAMINE KINASE"/>
    <property type="match status" value="1"/>
</dbReference>
<dbReference type="PANTHER" id="PTHR18964">
    <property type="entry name" value="ROK (REPRESSOR, ORF, KINASE) FAMILY"/>
    <property type="match status" value="1"/>
</dbReference>
<dbReference type="Pfam" id="PF00480">
    <property type="entry name" value="ROK"/>
    <property type="match status" value="1"/>
</dbReference>
<dbReference type="SUPFAM" id="SSF53067">
    <property type="entry name" value="Actin-like ATPase domain"/>
    <property type="match status" value="1"/>
</dbReference>
<dbReference type="PROSITE" id="PS01125">
    <property type="entry name" value="ROK"/>
    <property type="match status" value="1"/>
</dbReference>
<comment type="function">
    <text evidence="1">Catalyzes the phosphorylation of N-acetylmannosamine (ManNAc) to ManNAc-6-P.</text>
</comment>
<comment type="catalytic activity">
    <reaction evidence="1">
        <text>an N-acyl-D-mannosamine + ATP = an N-acyl-D-mannosamine 6-phosphate + ADP + H(+)</text>
        <dbReference type="Rhea" id="RHEA:23832"/>
        <dbReference type="ChEBI" id="CHEBI:15378"/>
        <dbReference type="ChEBI" id="CHEBI:16062"/>
        <dbReference type="ChEBI" id="CHEBI:30616"/>
        <dbReference type="ChEBI" id="CHEBI:57666"/>
        <dbReference type="ChEBI" id="CHEBI:456216"/>
        <dbReference type="EC" id="2.7.1.60"/>
    </reaction>
</comment>
<comment type="pathway">
    <text evidence="1">Amino-sugar metabolism; N-acetylneuraminate degradation; D-fructose 6-phosphate from N-acetylneuraminate: step 2/5.</text>
</comment>
<comment type="subunit">
    <text evidence="1">Homodimer.</text>
</comment>
<comment type="similarity">
    <text evidence="1">Belongs to the ROK (NagC/XylR) family. NanK subfamily.</text>
</comment>
<sequence>MTTLAIDIGGTKLAAALIDNNLRISQRRELPTPASKTPDALREALKALVEPLRAEARQVAIASTGIIQEGMLLALNPHNLGGLLHFPLVQTLETIAGLPTLAVNDAQAAAWAEYHALPDDIRDMVFITVSTGVGGGVVCDGKLLTGKGGLAGHLGHTLADPHGPVCGCGRVGCVEAIASGRGMAAAARDDLAGCDAKTLFIRAGEGHQQARHLVSQSAQVIARMIADVKATTDCQCVVIGGSVGLAEGYLEQVRAFLMQEPAPYHVALSAARYRHDAGLLGAALLAQGDTL</sequence>
<proteinExistence type="inferred from homology"/>
<feature type="chain" id="PRO_1000139688" description="N-acetylmannosamine kinase">
    <location>
        <begin position="1"/>
        <end position="291"/>
    </location>
</feature>
<feature type="binding site" evidence="1">
    <location>
        <begin position="5"/>
        <end position="12"/>
    </location>
    <ligand>
        <name>ATP</name>
        <dbReference type="ChEBI" id="CHEBI:30616"/>
    </ligand>
</feature>
<feature type="binding site" evidence="1">
    <location>
        <begin position="132"/>
        <end position="139"/>
    </location>
    <ligand>
        <name>ATP</name>
        <dbReference type="ChEBI" id="CHEBI:30616"/>
    </ligand>
</feature>
<feature type="binding site" evidence="1">
    <location>
        <position position="156"/>
    </location>
    <ligand>
        <name>Zn(2+)</name>
        <dbReference type="ChEBI" id="CHEBI:29105"/>
    </ligand>
</feature>
<feature type="binding site" evidence="1">
    <location>
        <position position="166"/>
    </location>
    <ligand>
        <name>Zn(2+)</name>
        <dbReference type="ChEBI" id="CHEBI:29105"/>
    </ligand>
</feature>
<feature type="binding site" evidence="1">
    <location>
        <position position="168"/>
    </location>
    <ligand>
        <name>Zn(2+)</name>
        <dbReference type="ChEBI" id="CHEBI:29105"/>
    </ligand>
</feature>
<feature type="binding site" evidence="1">
    <location>
        <position position="173"/>
    </location>
    <ligand>
        <name>Zn(2+)</name>
        <dbReference type="ChEBI" id="CHEBI:29105"/>
    </ligand>
</feature>
<gene>
    <name evidence="1" type="primary">nanK</name>
    <name type="ordered locus">SeAg_B3527</name>
</gene>
<accession>B5F7J6</accession>
<protein>
    <recommendedName>
        <fullName evidence="1">N-acetylmannosamine kinase</fullName>
        <ecNumber evidence="1">2.7.1.60</ecNumber>
    </recommendedName>
    <alternativeName>
        <fullName evidence="1">ManNAc kinase</fullName>
    </alternativeName>
    <alternativeName>
        <fullName evidence="1">N-acetyl-D-mannosamine kinase</fullName>
    </alternativeName>
</protein>
<keyword id="KW-0067">ATP-binding</keyword>
<keyword id="KW-0119">Carbohydrate metabolism</keyword>
<keyword id="KW-0418">Kinase</keyword>
<keyword id="KW-0479">Metal-binding</keyword>
<keyword id="KW-0547">Nucleotide-binding</keyword>
<keyword id="KW-0808">Transferase</keyword>
<keyword id="KW-0862">Zinc</keyword>
<evidence type="ECO:0000255" key="1">
    <source>
        <dbReference type="HAMAP-Rule" id="MF_01234"/>
    </source>
</evidence>
<organism>
    <name type="scientific">Salmonella agona (strain SL483)</name>
    <dbReference type="NCBI Taxonomy" id="454166"/>
    <lineage>
        <taxon>Bacteria</taxon>
        <taxon>Pseudomonadati</taxon>
        <taxon>Pseudomonadota</taxon>
        <taxon>Gammaproteobacteria</taxon>
        <taxon>Enterobacterales</taxon>
        <taxon>Enterobacteriaceae</taxon>
        <taxon>Salmonella</taxon>
    </lineage>
</organism>
<name>NANK_SALA4</name>
<reference key="1">
    <citation type="journal article" date="2011" name="J. Bacteriol.">
        <title>Comparative genomics of 28 Salmonella enterica isolates: evidence for CRISPR-mediated adaptive sublineage evolution.</title>
        <authorList>
            <person name="Fricke W.F."/>
            <person name="Mammel M.K."/>
            <person name="McDermott P.F."/>
            <person name="Tartera C."/>
            <person name="White D.G."/>
            <person name="Leclerc J.E."/>
            <person name="Ravel J."/>
            <person name="Cebula T.A."/>
        </authorList>
    </citation>
    <scope>NUCLEOTIDE SEQUENCE [LARGE SCALE GENOMIC DNA]</scope>
    <source>
        <strain>SL483</strain>
    </source>
</reference>